<evidence type="ECO:0000255" key="1">
    <source>
        <dbReference type="HAMAP-Rule" id="MF_00451"/>
    </source>
</evidence>
<keyword id="KW-0067">ATP-binding</keyword>
<keyword id="KW-0963">Cytoplasm</keyword>
<keyword id="KW-0418">Kinase</keyword>
<keyword id="KW-0460">Magnesium</keyword>
<keyword id="KW-0479">Metal-binding</keyword>
<keyword id="KW-0546">Nucleotide metabolism</keyword>
<keyword id="KW-0547">Nucleotide-binding</keyword>
<keyword id="KW-0597">Phosphoprotein</keyword>
<keyword id="KW-1185">Reference proteome</keyword>
<keyword id="KW-0808">Transferase</keyword>
<comment type="function">
    <text evidence="1">Major role in the synthesis of nucleoside triphosphates other than ATP. The ATP gamma phosphate is transferred to the NDP beta phosphate via a ping-pong mechanism, using a phosphorylated active-site intermediate.</text>
</comment>
<comment type="catalytic activity">
    <reaction evidence="1">
        <text>a 2'-deoxyribonucleoside 5'-diphosphate + ATP = a 2'-deoxyribonucleoside 5'-triphosphate + ADP</text>
        <dbReference type="Rhea" id="RHEA:44640"/>
        <dbReference type="ChEBI" id="CHEBI:30616"/>
        <dbReference type="ChEBI" id="CHEBI:61560"/>
        <dbReference type="ChEBI" id="CHEBI:73316"/>
        <dbReference type="ChEBI" id="CHEBI:456216"/>
        <dbReference type="EC" id="2.7.4.6"/>
    </reaction>
</comment>
<comment type="catalytic activity">
    <reaction evidence="1">
        <text>a ribonucleoside 5'-diphosphate + ATP = a ribonucleoside 5'-triphosphate + ADP</text>
        <dbReference type="Rhea" id="RHEA:18113"/>
        <dbReference type="ChEBI" id="CHEBI:30616"/>
        <dbReference type="ChEBI" id="CHEBI:57930"/>
        <dbReference type="ChEBI" id="CHEBI:61557"/>
        <dbReference type="ChEBI" id="CHEBI:456216"/>
        <dbReference type="EC" id="2.7.4.6"/>
    </reaction>
</comment>
<comment type="cofactor">
    <cofactor evidence="1">
        <name>Mg(2+)</name>
        <dbReference type="ChEBI" id="CHEBI:18420"/>
    </cofactor>
</comment>
<comment type="subunit">
    <text evidence="1">Homotetramer.</text>
</comment>
<comment type="subcellular location">
    <subcellularLocation>
        <location evidence="1">Cytoplasm</location>
    </subcellularLocation>
</comment>
<comment type="similarity">
    <text evidence="1">Belongs to the NDK family.</text>
</comment>
<protein>
    <recommendedName>
        <fullName evidence="1">Nucleoside diphosphate kinase</fullName>
        <shortName evidence="1">NDK</shortName>
        <shortName evidence="1">NDP kinase</shortName>
        <ecNumber evidence="1">2.7.4.6</ecNumber>
    </recommendedName>
    <alternativeName>
        <fullName evidence="1">Nucleoside-2-P kinase</fullName>
    </alternativeName>
</protein>
<accession>Q7VWK7</accession>
<dbReference type="EC" id="2.7.4.6" evidence="1"/>
<dbReference type="EMBL" id="BX640417">
    <property type="protein sequence ID" value="CAE42480.1"/>
    <property type="molecule type" value="Genomic_DNA"/>
</dbReference>
<dbReference type="RefSeq" id="NP_880850.1">
    <property type="nucleotide sequence ID" value="NC_002929.2"/>
</dbReference>
<dbReference type="RefSeq" id="WP_003810689.1">
    <property type="nucleotide sequence ID" value="NZ_CP039022.1"/>
</dbReference>
<dbReference type="SMR" id="Q7VWK7"/>
<dbReference type="STRING" id="257313.BP2202"/>
<dbReference type="PaxDb" id="257313-BP2202"/>
<dbReference type="GeneID" id="93204645"/>
<dbReference type="KEGG" id="bpe:BP2202"/>
<dbReference type="PATRIC" id="fig|257313.5.peg.2376"/>
<dbReference type="eggNOG" id="COG0105">
    <property type="taxonomic scope" value="Bacteria"/>
</dbReference>
<dbReference type="HOGENOM" id="CLU_060216_8_1_4"/>
<dbReference type="Proteomes" id="UP000002676">
    <property type="component" value="Chromosome"/>
</dbReference>
<dbReference type="GO" id="GO:0005737">
    <property type="term" value="C:cytoplasm"/>
    <property type="evidence" value="ECO:0007669"/>
    <property type="project" value="UniProtKB-SubCell"/>
</dbReference>
<dbReference type="GO" id="GO:0005524">
    <property type="term" value="F:ATP binding"/>
    <property type="evidence" value="ECO:0007669"/>
    <property type="project" value="UniProtKB-UniRule"/>
</dbReference>
<dbReference type="GO" id="GO:0046872">
    <property type="term" value="F:metal ion binding"/>
    <property type="evidence" value="ECO:0007669"/>
    <property type="project" value="UniProtKB-KW"/>
</dbReference>
<dbReference type="GO" id="GO:0004550">
    <property type="term" value="F:nucleoside diphosphate kinase activity"/>
    <property type="evidence" value="ECO:0007669"/>
    <property type="project" value="UniProtKB-UniRule"/>
</dbReference>
<dbReference type="GO" id="GO:0006241">
    <property type="term" value="P:CTP biosynthetic process"/>
    <property type="evidence" value="ECO:0007669"/>
    <property type="project" value="UniProtKB-UniRule"/>
</dbReference>
<dbReference type="GO" id="GO:0006183">
    <property type="term" value="P:GTP biosynthetic process"/>
    <property type="evidence" value="ECO:0007669"/>
    <property type="project" value="UniProtKB-UniRule"/>
</dbReference>
<dbReference type="GO" id="GO:0006228">
    <property type="term" value="P:UTP biosynthetic process"/>
    <property type="evidence" value="ECO:0007669"/>
    <property type="project" value="UniProtKB-UniRule"/>
</dbReference>
<dbReference type="CDD" id="cd04413">
    <property type="entry name" value="NDPk_I"/>
    <property type="match status" value="1"/>
</dbReference>
<dbReference type="FunFam" id="3.30.70.141:FF:000001">
    <property type="entry name" value="Nucleoside diphosphate kinase"/>
    <property type="match status" value="1"/>
</dbReference>
<dbReference type="Gene3D" id="3.30.70.141">
    <property type="entry name" value="Nucleoside diphosphate kinase-like domain"/>
    <property type="match status" value="1"/>
</dbReference>
<dbReference type="HAMAP" id="MF_00451">
    <property type="entry name" value="NDP_kinase"/>
    <property type="match status" value="1"/>
</dbReference>
<dbReference type="InterPro" id="IPR034907">
    <property type="entry name" value="NDK-like_dom"/>
</dbReference>
<dbReference type="InterPro" id="IPR036850">
    <property type="entry name" value="NDK-like_dom_sf"/>
</dbReference>
<dbReference type="InterPro" id="IPR001564">
    <property type="entry name" value="Nucleoside_diP_kinase"/>
</dbReference>
<dbReference type="InterPro" id="IPR023005">
    <property type="entry name" value="Nucleoside_diP_kinase_AS"/>
</dbReference>
<dbReference type="NCBIfam" id="NF001908">
    <property type="entry name" value="PRK00668.1"/>
    <property type="match status" value="1"/>
</dbReference>
<dbReference type="PANTHER" id="PTHR46161">
    <property type="entry name" value="NUCLEOSIDE DIPHOSPHATE KINASE"/>
    <property type="match status" value="1"/>
</dbReference>
<dbReference type="PANTHER" id="PTHR46161:SF3">
    <property type="entry name" value="NUCLEOSIDE DIPHOSPHATE KINASE DDB_G0292928-RELATED"/>
    <property type="match status" value="1"/>
</dbReference>
<dbReference type="Pfam" id="PF00334">
    <property type="entry name" value="NDK"/>
    <property type="match status" value="1"/>
</dbReference>
<dbReference type="PRINTS" id="PR01243">
    <property type="entry name" value="NUCDPKINASE"/>
</dbReference>
<dbReference type="SMART" id="SM00562">
    <property type="entry name" value="NDK"/>
    <property type="match status" value="1"/>
</dbReference>
<dbReference type="SUPFAM" id="SSF54919">
    <property type="entry name" value="Nucleoside diphosphate kinase, NDK"/>
    <property type="match status" value="1"/>
</dbReference>
<dbReference type="PROSITE" id="PS00469">
    <property type="entry name" value="NDPK"/>
    <property type="match status" value="1"/>
</dbReference>
<dbReference type="PROSITE" id="PS51374">
    <property type="entry name" value="NDPK_LIKE"/>
    <property type="match status" value="1"/>
</dbReference>
<proteinExistence type="inferred from homology"/>
<reference key="1">
    <citation type="journal article" date="2003" name="Nat. Genet.">
        <title>Comparative analysis of the genome sequences of Bordetella pertussis, Bordetella parapertussis and Bordetella bronchiseptica.</title>
        <authorList>
            <person name="Parkhill J."/>
            <person name="Sebaihia M."/>
            <person name="Preston A."/>
            <person name="Murphy L.D."/>
            <person name="Thomson N.R."/>
            <person name="Harris D.E."/>
            <person name="Holden M.T.G."/>
            <person name="Churcher C.M."/>
            <person name="Bentley S.D."/>
            <person name="Mungall K.L."/>
            <person name="Cerdeno-Tarraga A.-M."/>
            <person name="Temple L."/>
            <person name="James K.D."/>
            <person name="Harris B."/>
            <person name="Quail M.A."/>
            <person name="Achtman M."/>
            <person name="Atkin R."/>
            <person name="Baker S."/>
            <person name="Basham D."/>
            <person name="Bason N."/>
            <person name="Cherevach I."/>
            <person name="Chillingworth T."/>
            <person name="Collins M."/>
            <person name="Cronin A."/>
            <person name="Davis P."/>
            <person name="Doggett J."/>
            <person name="Feltwell T."/>
            <person name="Goble A."/>
            <person name="Hamlin N."/>
            <person name="Hauser H."/>
            <person name="Holroyd S."/>
            <person name="Jagels K."/>
            <person name="Leather S."/>
            <person name="Moule S."/>
            <person name="Norberczak H."/>
            <person name="O'Neil S."/>
            <person name="Ormond D."/>
            <person name="Price C."/>
            <person name="Rabbinowitsch E."/>
            <person name="Rutter S."/>
            <person name="Sanders M."/>
            <person name="Saunders D."/>
            <person name="Seeger K."/>
            <person name="Sharp S."/>
            <person name="Simmonds M."/>
            <person name="Skelton J."/>
            <person name="Squares R."/>
            <person name="Squares S."/>
            <person name="Stevens K."/>
            <person name="Unwin L."/>
            <person name="Whitehead S."/>
            <person name="Barrell B.G."/>
            <person name="Maskell D.J."/>
        </authorList>
    </citation>
    <scope>NUCLEOTIDE SEQUENCE [LARGE SCALE GENOMIC DNA]</scope>
    <source>
        <strain>Tohama I / ATCC BAA-589 / NCTC 13251</strain>
    </source>
</reference>
<name>NDK_BORPE</name>
<organism>
    <name type="scientific">Bordetella pertussis (strain Tohama I / ATCC BAA-589 / NCTC 13251)</name>
    <dbReference type="NCBI Taxonomy" id="257313"/>
    <lineage>
        <taxon>Bacteria</taxon>
        <taxon>Pseudomonadati</taxon>
        <taxon>Pseudomonadota</taxon>
        <taxon>Betaproteobacteria</taxon>
        <taxon>Burkholderiales</taxon>
        <taxon>Alcaligenaceae</taxon>
        <taxon>Bordetella</taxon>
    </lineage>
</organism>
<feature type="chain" id="PRO_0000136953" description="Nucleoside diphosphate kinase">
    <location>
        <begin position="1"/>
        <end position="141"/>
    </location>
</feature>
<feature type="active site" description="Pros-phosphohistidine intermediate" evidence="1">
    <location>
        <position position="117"/>
    </location>
</feature>
<feature type="binding site" evidence="1">
    <location>
        <position position="11"/>
    </location>
    <ligand>
        <name>ATP</name>
        <dbReference type="ChEBI" id="CHEBI:30616"/>
    </ligand>
</feature>
<feature type="binding site" evidence="1">
    <location>
        <position position="59"/>
    </location>
    <ligand>
        <name>ATP</name>
        <dbReference type="ChEBI" id="CHEBI:30616"/>
    </ligand>
</feature>
<feature type="binding site" evidence="1">
    <location>
        <position position="87"/>
    </location>
    <ligand>
        <name>ATP</name>
        <dbReference type="ChEBI" id="CHEBI:30616"/>
    </ligand>
</feature>
<feature type="binding site" evidence="1">
    <location>
        <position position="93"/>
    </location>
    <ligand>
        <name>ATP</name>
        <dbReference type="ChEBI" id="CHEBI:30616"/>
    </ligand>
</feature>
<feature type="binding site" evidence="1">
    <location>
        <position position="104"/>
    </location>
    <ligand>
        <name>ATP</name>
        <dbReference type="ChEBI" id="CHEBI:30616"/>
    </ligand>
</feature>
<feature type="binding site" evidence="1">
    <location>
        <position position="114"/>
    </location>
    <ligand>
        <name>ATP</name>
        <dbReference type="ChEBI" id="CHEBI:30616"/>
    </ligand>
</feature>
<gene>
    <name evidence="1" type="primary">ndk</name>
    <name type="ordered locus">BP2202</name>
</gene>
<sequence>MSIERTLSIIKPDAVAKNVVGQIVARFEQAGLKVIAARMQQLSRTDAERFYAVHKERPFFKDLVDFMVSGPVFVQVLEGESAIQKNRDLMGATDPKKAAPGTIRADFADSIDANAVHGSDAPETAAVEVAFFFPEINIHSR</sequence>